<reference key="1">
    <citation type="journal article" date="2008" name="J. Bacteriol.">
        <title>Insights into the environmental resistance gene pool from the genome sequence of the multidrug-resistant environmental isolate Escherichia coli SMS-3-5.</title>
        <authorList>
            <person name="Fricke W.F."/>
            <person name="Wright M.S."/>
            <person name="Lindell A.H."/>
            <person name="Harkins D.M."/>
            <person name="Baker-Austin C."/>
            <person name="Ravel J."/>
            <person name="Stepanauskas R."/>
        </authorList>
    </citation>
    <scope>NUCLEOTIDE SEQUENCE [LARGE SCALE GENOMIC DNA]</scope>
    <source>
        <strain>SMS-3-5 / SECEC</strain>
    </source>
</reference>
<proteinExistence type="inferred from homology"/>
<gene>
    <name evidence="1" type="primary">cbpA</name>
    <name type="ordered locus">EcSMS35_2124</name>
</gene>
<keyword id="KW-0143">Chaperone</keyword>
<keyword id="KW-0963">Cytoplasm</keyword>
<keyword id="KW-0238">DNA-binding</keyword>
<sequence length="306" mass="34428">MELKDYYAIMGVKPTDDLKTIKTAYRRLARKYHPDVSKEPDAEARFKEVAEAWEVLSDEQRRAEYDQMWQHRNDPQFSRQFQHGDGQSFNAEDFDDIFSSIFGQHARQSHQRPATRGHDIEIEVAVFLEETLTEHKRTISYNLPVYNAFGMIEQEIPKTLKVKIPAGVGNGQRIRLKGQGTPGENGGPNGDLWLVIHIAPHPLFDIVGQDLEIVVPVSPWEAALGAKVTVPTLKESILLTIPPGSQAGQRLRVKGKGLVSKKQTGDLYAVLKIVMPPKPDENTAALWQQLADAQSSFEPRKDWGKA</sequence>
<dbReference type="EMBL" id="CP000970">
    <property type="protein sequence ID" value="ACB18101.1"/>
    <property type="molecule type" value="Genomic_DNA"/>
</dbReference>
<dbReference type="RefSeq" id="WP_000420637.1">
    <property type="nucleotide sequence ID" value="NC_010498.1"/>
</dbReference>
<dbReference type="SMR" id="B1LJ04"/>
<dbReference type="KEGG" id="ecm:EcSMS35_2124"/>
<dbReference type="HOGENOM" id="CLU_017633_0_0_6"/>
<dbReference type="Proteomes" id="UP000007011">
    <property type="component" value="Chromosome"/>
</dbReference>
<dbReference type="GO" id="GO:0005737">
    <property type="term" value="C:cytoplasm"/>
    <property type="evidence" value="ECO:0007669"/>
    <property type="project" value="UniProtKB-UniRule"/>
</dbReference>
<dbReference type="GO" id="GO:0009295">
    <property type="term" value="C:nucleoid"/>
    <property type="evidence" value="ECO:0007669"/>
    <property type="project" value="UniProtKB-SubCell"/>
</dbReference>
<dbReference type="GO" id="GO:0003681">
    <property type="term" value="F:bent DNA binding"/>
    <property type="evidence" value="ECO:0007669"/>
    <property type="project" value="UniProtKB-UniRule"/>
</dbReference>
<dbReference type="GO" id="GO:0051082">
    <property type="term" value="F:unfolded protein binding"/>
    <property type="evidence" value="ECO:0007669"/>
    <property type="project" value="InterPro"/>
</dbReference>
<dbReference type="GO" id="GO:0051085">
    <property type="term" value="P:chaperone cofactor-dependent protein refolding"/>
    <property type="evidence" value="ECO:0007669"/>
    <property type="project" value="TreeGrafter"/>
</dbReference>
<dbReference type="GO" id="GO:0042026">
    <property type="term" value="P:protein refolding"/>
    <property type="evidence" value="ECO:0007669"/>
    <property type="project" value="TreeGrafter"/>
</dbReference>
<dbReference type="CDD" id="cd06257">
    <property type="entry name" value="DnaJ"/>
    <property type="match status" value="1"/>
</dbReference>
<dbReference type="CDD" id="cd10747">
    <property type="entry name" value="DnaJ_C"/>
    <property type="match status" value="1"/>
</dbReference>
<dbReference type="FunFam" id="1.10.287.110:FF:000013">
    <property type="entry name" value="Curved DNA-binding protein"/>
    <property type="match status" value="1"/>
</dbReference>
<dbReference type="FunFam" id="2.60.260.20:FF:000008">
    <property type="entry name" value="Curved DNA-binding protein"/>
    <property type="match status" value="1"/>
</dbReference>
<dbReference type="FunFam" id="2.60.260.20:FF:000010">
    <property type="entry name" value="Curved DNA-binding protein"/>
    <property type="match status" value="1"/>
</dbReference>
<dbReference type="Gene3D" id="1.10.287.110">
    <property type="entry name" value="DnaJ domain"/>
    <property type="match status" value="1"/>
</dbReference>
<dbReference type="Gene3D" id="1.20.5.460">
    <property type="entry name" value="Single helix bin"/>
    <property type="match status" value="1"/>
</dbReference>
<dbReference type="Gene3D" id="2.60.260.20">
    <property type="entry name" value="Urease metallochaperone UreE, N-terminal domain"/>
    <property type="match status" value="2"/>
</dbReference>
<dbReference type="HAMAP" id="MF_01154">
    <property type="entry name" value="CbpA"/>
    <property type="match status" value="1"/>
</dbReference>
<dbReference type="InterPro" id="IPR023859">
    <property type="entry name" value="DNA-bd_curved-DNA"/>
</dbReference>
<dbReference type="InterPro" id="IPR002939">
    <property type="entry name" value="DnaJ_C"/>
</dbReference>
<dbReference type="InterPro" id="IPR001623">
    <property type="entry name" value="DnaJ_domain"/>
</dbReference>
<dbReference type="InterPro" id="IPR018253">
    <property type="entry name" value="DnaJ_domain_CS"/>
</dbReference>
<dbReference type="InterPro" id="IPR008971">
    <property type="entry name" value="HSP40/DnaJ_pept-bd"/>
</dbReference>
<dbReference type="InterPro" id="IPR036869">
    <property type="entry name" value="J_dom_sf"/>
</dbReference>
<dbReference type="NCBIfam" id="NF007618">
    <property type="entry name" value="PRK10266.1"/>
    <property type="match status" value="1"/>
</dbReference>
<dbReference type="PANTHER" id="PTHR43096">
    <property type="entry name" value="DNAJ HOMOLOG 1, MITOCHONDRIAL-RELATED"/>
    <property type="match status" value="1"/>
</dbReference>
<dbReference type="PANTHER" id="PTHR43096:SF52">
    <property type="entry name" value="DNAJ HOMOLOG 1, MITOCHONDRIAL-RELATED"/>
    <property type="match status" value="1"/>
</dbReference>
<dbReference type="Pfam" id="PF00226">
    <property type="entry name" value="DnaJ"/>
    <property type="match status" value="1"/>
</dbReference>
<dbReference type="Pfam" id="PF01556">
    <property type="entry name" value="DnaJ_C"/>
    <property type="match status" value="1"/>
</dbReference>
<dbReference type="PRINTS" id="PR00625">
    <property type="entry name" value="JDOMAIN"/>
</dbReference>
<dbReference type="SMART" id="SM00271">
    <property type="entry name" value="DnaJ"/>
    <property type="match status" value="1"/>
</dbReference>
<dbReference type="SUPFAM" id="SSF46565">
    <property type="entry name" value="Chaperone J-domain"/>
    <property type="match status" value="1"/>
</dbReference>
<dbReference type="SUPFAM" id="SSF49493">
    <property type="entry name" value="HSP40/DnaJ peptide-binding domain"/>
    <property type="match status" value="2"/>
</dbReference>
<dbReference type="PROSITE" id="PS00636">
    <property type="entry name" value="DNAJ_1"/>
    <property type="match status" value="1"/>
</dbReference>
<dbReference type="PROSITE" id="PS50076">
    <property type="entry name" value="DNAJ_2"/>
    <property type="match status" value="1"/>
</dbReference>
<accession>B1LJ04</accession>
<feature type="chain" id="PRO_1000137752" description="Curved DNA-binding protein">
    <location>
        <begin position="1"/>
        <end position="306"/>
    </location>
</feature>
<feature type="domain" description="J" evidence="1">
    <location>
        <begin position="5"/>
        <end position="69"/>
    </location>
</feature>
<protein>
    <recommendedName>
        <fullName evidence="1">Curved DNA-binding protein</fullName>
    </recommendedName>
</protein>
<evidence type="ECO:0000255" key="1">
    <source>
        <dbReference type="HAMAP-Rule" id="MF_01154"/>
    </source>
</evidence>
<name>CBPA_ECOSM</name>
<organism>
    <name type="scientific">Escherichia coli (strain SMS-3-5 / SECEC)</name>
    <dbReference type="NCBI Taxonomy" id="439855"/>
    <lineage>
        <taxon>Bacteria</taxon>
        <taxon>Pseudomonadati</taxon>
        <taxon>Pseudomonadota</taxon>
        <taxon>Gammaproteobacteria</taxon>
        <taxon>Enterobacterales</taxon>
        <taxon>Enterobacteriaceae</taxon>
        <taxon>Escherichia</taxon>
    </lineage>
</organism>
<comment type="function">
    <text evidence="1">DNA-binding protein that preferentially recognizes a curved DNA sequence. It is probably a functional analog of DnaJ; displays overlapping activities with DnaJ, but functions under different conditions, probably acting as a molecular chaperone in an adaptive response to environmental stresses other than heat shock. Lacks autonomous chaperone activity; binds native substrates and targets them for recognition by DnaK. Its activity is inhibited by the binding of CbpM.</text>
</comment>
<comment type="subcellular location">
    <subcellularLocation>
        <location evidence="1">Cytoplasm</location>
        <location evidence="1">Nucleoid</location>
    </subcellularLocation>
</comment>